<keyword id="KW-0007">Acetylation</keyword>
<keyword id="KW-0024">Alternative initiation</keyword>
<keyword id="KW-0378">Hydrolase</keyword>
<keyword id="KW-0460">Magnesium</keyword>
<keyword id="KW-0464">Manganese</keyword>
<keyword id="KW-0479">Metal-binding</keyword>
<keyword id="KW-1185">Reference proteome</keyword>
<proteinExistence type="evidence at protein level"/>
<gene>
    <name type="primary">YSA1</name>
    <name type="ordered locus">YBR111C</name>
    <name type="ORF">YBR0907</name>
</gene>
<feature type="chain" id="PRO_0000057050" description="ADP-ribose pyrophosphatase">
    <location>
        <begin position="1"/>
        <end position="231"/>
    </location>
</feature>
<feature type="domain" description="Nudix hydrolase" evidence="2">
    <location>
        <begin position="75"/>
        <end position="214"/>
    </location>
</feature>
<feature type="short sequence motif" description="Nudix box">
    <location>
        <begin position="116"/>
        <end position="137"/>
    </location>
</feature>
<feature type="binding site" description="in other chain" evidence="1">
    <location>
        <position position="46"/>
    </location>
    <ligand>
        <name>substrate</name>
        <note>ligand shared between dimeric partners</note>
    </ligand>
</feature>
<feature type="binding site" evidence="1">
    <location>
        <begin position="64"/>
        <end position="65"/>
    </location>
    <ligand>
        <name>substrate</name>
        <note>ligand shared between dimeric partners</note>
    </ligand>
</feature>
<feature type="binding site" evidence="1">
    <location>
        <position position="69"/>
    </location>
    <ligand>
        <name>substrate</name>
        <note>ligand shared between dimeric partners</note>
    </ligand>
</feature>
<feature type="binding site" description="in other chain" evidence="1">
    <location>
        <position position="103"/>
    </location>
    <ligand>
        <name>substrate</name>
        <note>ligand shared between dimeric partners</note>
    </ligand>
</feature>
<feature type="binding site" evidence="1">
    <location>
        <position position="115"/>
    </location>
    <ligand>
        <name>Mg(2+)</name>
        <dbReference type="ChEBI" id="CHEBI:18420"/>
        <label>1</label>
    </ligand>
</feature>
<feature type="binding site" description="in other chain" evidence="1">
    <location>
        <position position="117"/>
    </location>
    <ligand>
        <name>substrate</name>
        <note>ligand shared between dimeric partners</note>
    </ligand>
</feature>
<feature type="binding site" evidence="1">
    <location>
        <position position="131"/>
    </location>
    <ligand>
        <name>Mg(2+)</name>
        <dbReference type="ChEBI" id="CHEBI:18420"/>
        <label>2</label>
    </ligand>
</feature>
<feature type="binding site" evidence="1">
    <location>
        <position position="131"/>
    </location>
    <ligand>
        <name>Mg(2+)</name>
        <dbReference type="ChEBI" id="CHEBI:18420"/>
        <label>3</label>
    </ligand>
</feature>
<feature type="binding site" evidence="1">
    <location>
        <position position="135"/>
    </location>
    <ligand>
        <name>Mg(2+)</name>
        <dbReference type="ChEBI" id="CHEBI:18420"/>
        <label>1</label>
    </ligand>
</feature>
<feature type="binding site" evidence="1">
    <location>
        <position position="135"/>
    </location>
    <ligand>
        <name>Mg(2+)</name>
        <dbReference type="ChEBI" id="CHEBI:18420"/>
        <label>3</label>
    </ligand>
</feature>
<feature type="binding site" description="in other chain" evidence="1">
    <location>
        <position position="152"/>
    </location>
    <ligand>
        <name>substrate</name>
        <note>ligand shared between dimeric partners</note>
    </ligand>
</feature>
<feature type="binding site" evidence="1">
    <location>
        <position position="185"/>
    </location>
    <ligand>
        <name>Mg(2+)</name>
        <dbReference type="ChEBI" id="CHEBI:18420"/>
        <label>3</label>
    </ligand>
</feature>
<feature type="splice variant" id="VSP_058126" description="In isoform 2." evidence="5">
    <location>
        <begin position="1"/>
        <end position="19"/>
    </location>
</feature>
<feature type="initiator methionine" description="Removed" evidence="7">
    <location sequence="Q01976-2">
        <position position="1"/>
    </location>
</feature>
<feature type="modified residue" description="N-acetylserine" evidence="7">
    <location sequence="Q01976-2">
        <position position="2"/>
    </location>
</feature>
<name>ADPP_YEAST</name>
<organism>
    <name type="scientific">Saccharomyces cerevisiae (strain ATCC 204508 / S288c)</name>
    <name type="common">Baker's yeast</name>
    <dbReference type="NCBI Taxonomy" id="559292"/>
    <lineage>
        <taxon>Eukaryota</taxon>
        <taxon>Fungi</taxon>
        <taxon>Dikarya</taxon>
        <taxon>Ascomycota</taxon>
        <taxon>Saccharomycotina</taxon>
        <taxon>Saccharomycetes</taxon>
        <taxon>Saccharomycetales</taxon>
        <taxon>Saccharomycetaceae</taxon>
        <taxon>Saccharomyces</taxon>
    </lineage>
</organism>
<reference key="1">
    <citation type="journal article" date="1994" name="Yeast">
        <title>Analysis of a 70 kb region on the right arm of yeast chromosome II.</title>
        <authorList>
            <person name="Mannhaupt G."/>
            <person name="Stucka R."/>
            <person name="Ehnle S."/>
            <person name="Vetter I."/>
            <person name="Feldmann H."/>
        </authorList>
    </citation>
    <scope>NUCLEOTIDE SEQUENCE [GENOMIC DNA]</scope>
    <source>
        <strain>ATCC 204508 / S288c</strain>
    </source>
</reference>
<reference key="2">
    <citation type="journal article" date="1994" name="EMBO J.">
        <title>Complete DNA sequence of yeast chromosome II.</title>
        <authorList>
            <person name="Feldmann H."/>
            <person name="Aigle M."/>
            <person name="Aljinovic G."/>
            <person name="Andre B."/>
            <person name="Baclet M.C."/>
            <person name="Barthe C."/>
            <person name="Baur A."/>
            <person name="Becam A.-M."/>
            <person name="Biteau N."/>
            <person name="Boles E."/>
            <person name="Brandt T."/>
            <person name="Brendel M."/>
            <person name="Brueckner M."/>
            <person name="Bussereau F."/>
            <person name="Christiansen C."/>
            <person name="Contreras R."/>
            <person name="Crouzet M."/>
            <person name="Cziepluch C."/>
            <person name="Demolis N."/>
            <person name="Delaveau T."/>
            <person name="Doignon F."/>
            <person name="Domdey H."/>
            <person name="Duesterhus S."/>
            <person name="Dubois E."/>
            <person name="Dujon B."/>
            <person name="El Bakkoury M."/>
            <person name="Entian K.-D."/>
            <person name="Feuermann M."/>
            <person name="Fiers W."/>
            <person name="Fobo G.M."/>
            <person name="Fritz C."/>
            <person name="Gassenhuber J."/>
            <person name="Glansdorff N."/>
            <person name="Goffeau A."/>
            <person name="Grivell L.A."/>
            <person name="de Haan M."/>
            <person name="Hein C."/>
            <person name="Herbert C.J."/>
            <person name="Hollenberg C.P."/>
            <person name="Holmstroem K."/>
            <person name="Jacq C."/>
            <person name="Jacquet M."/>
            <person name="Jauniaux J.-C."/>
            <person name="Jonniaux J.-L."/>
            <person name="Kallesoee T."/>
            <person name="Kiesau P."/>
            <person name="Kirchrath L."/>
            <person name="Koetter P."/>
            <person name="Korol S."/>
            <person name="Liebl S."/>
            <person name="Logghe M."/>
            <person name="Lohan A.J.E."/>
            <person name="Louis E.J."/>
            <person name="Li Z.Y."/>
            <person name="Maat M.J."/>
            <person name="Mallet L."/>
            <person name="Mannhaupt G."/>
            <person name="Messenguy F."/>
            <person name="Miosga T."/>
            <person name="Molemans F."/>
            <person name="Mueller S."/>
            <person name="Nasr F."/>
            <person name="Obermaier B."/>
            <person name="Perea J."/>
            <person name="Pierard A."/>
            <person name="Piravandi E."/>
            <person name="Pohl F.M."/>
            <person name="Pohl T.M."/>
            <person name="Potier S."/>
            <person name="Proft M."/>
            <person name="Purnelle B."/>
            <person name="Ramezani Rad M."/>
            <person name="Rieger M."/>
            <person name="Rose M."/>
            <person name="Schaaff-Gerstenschlaeger I."/>
            <person name="Scherens B."/>
            <person name="Schwarzlose C."/>
            <person name="Skala J."/>
            <person name="Slonimski P.P."/>
            <person name="Smits P.H.M."/>
            <person name="Souciet J.-L."/>
            <person name="Steensma H.Y."/>
            <person name="Stucka R."/>
            <person name="Urrestarazu L.A."/>
            <person name="van der Aart Q.J.M."/>
            <person name="Van Dyck L."/>
            <person name="Vassarotti A."/>
            <person name="Vetter I."/>
            <person name="Vierendeels F."/>
            <person name="Vissers S."/>
            <person name="Wagner G."/>
            <person name="de Wergifosse P."/>
            <person name="Wolfe K.H."/>
            <person name="Zagulski M."/>
            <person name="Zimmermann F.K."/>
            <person name="Mewes H.-W."/>
            <person name="Kleine K."/>
        </authorList>
    </citation>
    <scope>NUCLEOTIDE SEQUENCE [LARGE SCALE GENOMIC DNA]</scope>
    <source>
        <strain>ATCC 204508 / S288c</strain>
    </source>
</reference>
<reference key="3">
    <citation type="journal article" date="2014" name="G3 (Bethesda)">
        <title>The reference genome sequence of Saccharomyces cerevisiae: Then and now.</title>
        <authorList>
            <person name="Engel S.R."/>
            <person name="Dietrich F.S."/>
            <person name="Fisk D.G."/>
            <person name="Binkley G."/>
            <person name="Balakrishnan R."/>
            <person name="Costanzo M.C."/>
            <person name="Dwight S.S."/>
            <person name="Hitz B.C."/>
            <person name="Karra K."/>
            <person name="Nash R.S."/>
            <person name="Weng S."/>
            <person name="Wong E.D."/>
            <person name="Lloyd P."/>
            <person name="Skrzypek M.S."/>
            <person name="Miyasato S.R."/>
            <person name="Simison M."/>
            <person name="Cherry J.M."/>
        </authorList>
    </citation>
    <scope>GENOME REANNOTATION</scope>
    <source>
        <strain>ATCC 204508 / S288c</strain>
    </source>
</reference>
<reference key="4">
    <citation type="journal article" date="2007" name="Genome Res.">
        <title>Approaching a complete repository of sequence-verified protein-encoding clones for Saccharomyces cerevisiae.</title>
        <authorList>
            <person name="Hu Y."/>
            <person name="Rolfs A."/>
            <person name="Bhullar B."/>
            <person name="Murthy T.V.S."/>
            <person name="Zhu C."/>
            <person name="Berger M.F."/>
            <person name="Camargo A.A."/>
            <person name="Kelley F."/>
            <person name="McCarron S."/>
            <person name="Jepson D."/>
            <person name="Richardson A."/>
            <person name="Raphael J."/>
            <person name="Moreira D."/>
            <person name="Taycher E."/>
            <person name="Zuo D."/>
            <person name="Mohr S."/>
            <person name="Kane M.F."/>
            <person name="Williamson J."/>
            <person name="Simpson A.J.G."/>
            <person name="Bulyk M.L."/>
            <person name="Harlow E."/>
            <person name="Marsischky G."/>
            <person name="Kolodner R.D."/>
            <person name="LaBaer J."/>
        </authorList>
    </citation>
    <scope>NUCLEOTIDE SEQUENCE [GENOMIC DNA]</scope>
    <source>
        <strain>ATCC 204508 / S288c</strain>
    </source>
</reference>
<reference key="5">
    <citation type="journal article" date="1992" name="Yeast">
        <title>Molecular analysis of yeast chromosome II between CMD1 and LYS2: the excision repair gene RAD16 located in this region belongs to a novel group of double-finger proteins.</title>
        <authorList>
            <person name="Mannhaupt G."/>
            <person name="Stucka R."/>
            <person name="Ehnle S."/>
            <person name="Vetter I."/>
            <person name="Feldmann H."/>
        </authorList>
    </citation>
    <scope>NUCLEOTIDE SEQUENCE [GENOMIC DNA] OF 1-47</scope>
    <source>
        <strain>ATCC 204508 / S288c</strain>
    </source>
</reference>
<reference key="6">
    <citation type="journal article" date="1999" name="J. Biol. Chem.">
        <title>Studies on the ADP-ribose pyrophosphatase subfamily of the nudix hydrolases and tentative identification of trgB, a gene associated with tellurite resistance.</title>
        <authorList>
            <person name="Dunn C.A."/>
            <person name="O'Handley S.F."/>
            <person name="Frick D.N."/>
            <person name="Bessman M.J."/>
        </authorList>
    </citation>
    <scope>CHARACTERIZATION</scope>
    <scope>CATALYTIC ACTIVITY</scope>
</reference>
<reference key="7">
    <citation type="journal article" date="2003" name="Nature">
        <title>Global analysis of protein expression in yeast.</title>
        <authorList>
            <person name="Ghaemmaghami S."/>
            <person name="Huh W.-K."/>
            <person name="Bower K."/>
            <person name="Howson R.W."/>
            <person name="Belle A."/>
            <person name="Dephoure N."/>
            <person name="O'Shea E.K."/>
            <person name="Weissman J.S."/>
        </authorList>
    </citation>
    <scope>LEVEL OF PROTEIN EXPRESSION [LARGE SCALE ANALYSIS]</scope>
</reference>
<reference key="8">
    <citation type="journal article" date="2012" name="Proc. Natl. Acad. Sci. U.S.A.">
        <title>N-terminal acetylome analyses and functional insights of the N-terminal acetyltransferase NatB.</title>
        <authorList>
            <person name="Van Damme P."/>
            <person name="Lasa M."/>
            <person name="Polevoda B."/>
            <person name="Gazquez C."/>
            <person name="Elosegui-Artola A."/>
            <person name="Kim D.S."/>
            <person name="De Juan-Pardo E."/>
            <person name="Demeyer K."/>
            <person name="Hole K."/>
            <person name="Larrea E."/>
            <person name="Timmerman E."/>
            <person name="Prieto J."/>
            <person name="Arnesen T."/>
            <person name="Sherman F."/>
            <person name="Gevaert K."/>
            <person name="Aldabe R."/>
        </authorList>
    </citation>
    <scope>ACETYLATION [LARGE SCALE ANALYSIS] AT SER-2 (ISOFORM 2)</scope>
    <scope>CLEAVAGE OF INITIATOR METHIONINE [LARGE SCALE ANALYSIS] (ISOFORM 2)</scope>
    <scope>IDENTIFICATION BY MASS SPECTROMETRY [LARGE SCALE ANALYSIS]</scope>
</reference>
<comment type="catalytic activity">
    <reaction evidence="3">
        <text>ADP-D-ribose + H2O = D-ribose 5-phosphate + AMP + 2 H(+)</text>
        <dbReference type="Rhea" id="RHEA:10412"/>
        <dbReference type="ChEBI" id="CHEBI:15377"/>
        <dbReference type="ChEBI" id="CHEBI:15378"/>
        <dbReference type="ChEBI" id="CHEBI:57967"/>
        <dbReference type="ChEBI" id="CHEBI:78346"/>
        <dbReference type="ChEBI" id="CHEBI:456215"/>
        <dbReference type="EC" id="3.6.1.13"/>
    </reaction>
    <physiologicalReaction direction="left-to-right" evidence="6">
        <dbReference type="Rhea" id="RHEA:10413"/>
    </physiologicalReaction>
</comment>
<comment type="cofactor">
    <cofactor evidence="1">
        <name>Mg(2+)</name>
        <dbReference type="ChEBI" id="CHEBI:18420"/>
    </cofactor>
    <cofactor evidence="1">
        <name>Mn(2+)</name>
        <dbReference type="ChEBI" id="CHEBI:29035"/>
    </cofactor>
    <text evidence="1">Binds 3 Mg(2+) ions per subunit. Can also accept Mn(2+) ions.</text>
</comment>
<comment type="alternative products">
    <event type="alternative initiation"/>
    <isoform>
        <id>Q01976-1</id>
        <name>1</name>
        <sequence type="displayed"/>
    </isoform>
    <isoform>
        <id>Q01976-2</id>
        <name>2</name>
        <sequence type="described" ref="VSP_058126"/>
    </isoform>
</comment>
<comment type="miscellaneous">
    <text evidence="4">Present with 7330 molecules/cell in log phase SD medium.</text>
</comment>
<comment type="similarity">
    <text evidence="5">Belongs to the Nudix hydrolase family. NudF subfamily.</text>
</comment>
<protein>
    <recommendedName>
        <fullName>ADP-ribose pyrophosphatase</fullName>
        <ecNumber>3.6.1.13</ecNumber>
    </recommendedName>
    <alternativeName>
        <fullName>ADP-ribose diphosphatase</fullName>
    </alternativeName>
    <alternativeName>
        <fullName>ADP-ribose phosphohydrolase</fullName>
    </alternativeName>
    <alternativeName>
        <fullName>Adenosine diphosphoribose pyrophosphatase</fullName>
        <shortName>ADPR-PPase</shortName>
    </alternativeName>
</protein>
<sequence>MFLRNVRVISLNSRRLFRTMSTVKGKPEDAKIIEARHVKETSDCKWIGLQKIIYKDPNGKEREWDSAVRTTRSSGGVDGIGILTILKYKDGKPDEILLQKQFRPPVEGVCIEMPAGLIDAGEDIDTAALRELKEETGYSGKIISKSPTVFNDPGFTNTNLCLVTVEVDMSLPENQKPVTQLEDNEFIECFSVELHKFPDEMVKLDQQGYKLDARVQNVAQGILMAKQYHIK</sequence>
<dbReference type="EC" id="3.6.1.13"/>
<dbReference type="EMBL" id="X78993">
    <property type="protein sequence ID" value="CAA55614.1"/>
    <property type="molecule type" value="Genomic_DNA"/>
</dbReference>
<dbReference type="EMBL" id="Z35980">
    <property type="protein sequence ID" value="CAA85068.1"/>
    <property type="molecule type" value="Genomic_DNA"/>
</dbReference>
<dbReference type="EMBL" id="AY558185">
    <property type="protein sequence ID" value="AAS56511.1"/>
    <property type="molecule type" value="Genomic_DNA"/>
</dbReference>
<dbReference type="EMBL" id="X66247">
    <property type="protein sequence ID" value="CAA46972.1"/>
    <property type="molecule type" value="Genomic_DNA"/>
</dbReference>
<dbReference type="EMBL" id="BK006936">
    <property type="protein sequence ID" value="DAA07230.1"/>
    <property type="molecule type" value="Genomic_DNA"/>
</dbReference>
<dbReference type="PIR" id="S48276">
    <property type="entry name" value="S48276"/>
</dbReference>
<dbReference type="RefSeq" id="NP_009669.1">
    <molecule id="Q01976-1"/>
    <property type="nucleotide sequence ID" value="NM_001178459.1"/>
</dbReference>
<dbReference type="SMR" id="Q01976"/>
<dbReference type="BioGRID" id="32815">
    <property type="interactions" value="166"/>
</dbReference>
<dbReference type="FunCoup" id="Q01976">
    <property type="interactions" value="772"/>
</dbReference>
<dbReference type="IntAct" id="Q01976">
    <property type="interactions" value="3"/>
</dbReference>
<dbReference type="STRING" id="4932.YBR111C"/>
<dbReference type="iPTMnet" id="Q01976"/>
<dbReference type="PaxDb" id="4932-YBR111C"/>
<dbReference type="PeptideAtlas" id="Q01976"/>
<dbReference type="EnsemblFungi" id="YBR111C_mRNA">
    <molecule id="Q01976-1"/>
    <property type="protein sequence ID" value="YBR111C"/>
    <property type="gene ID" value="YBR111C"/>
</dbReference>
<dbReference type="GeneID" id="852408"/>
<dbReference type="KEGG" id="sce:YBR111C"/>
<dbReference type="AGR" id="SGD:S000000315"/>
<dbReference type="SGD" id="S000000315">
    <property type="gene designation" value="YSA1"/>
</dbReference>
<dbReference type="VEuPathDB" id="FungiDB:YBR111C"/>
<dbReference type="eggNOG" id="KOG3041">
    <property type="taxonomic scope" value="Eukaryota"/>
</dbReference>
<dbReference type="GeneTree" id="ENSGT00940000154045"/>
<dbReference type="HOGENOM" id="CLU_062658_0_1_1"/>
<dbReference type="InParanoid" id="Q01976"/>
<dbReference type="OMA" id="NDPGLCN"/>
<dbReference type="OrthoDB" id="10249920at2759"/>
<dbReference type="BioCyc" id="YEAST:G3O-29072-MONOMER"/>
<dbReference type="Reactome" id="R-SCE-2393930">
    <property type="pathway name" value="Phosphate bond hydrolysis by NUDT proteins"/>
</dbReference>
<dbReference type="BioGRID-ORCS" id="852408">
    <property type="hits" value="1 hit in 10 CRISPR screens"/>
</dbReference>
<dbReference type="PRO" id="PR:Q01976"/>
<dbReference type="Proteomes" id="UP000002311">
    <property type="component" value="Chromosome II"/>
</dbReference>
<dbReference type="RNAct" id="Q01976">
    <property type="molecule type" value="protein"/>
</dbReference>
<dbReference type="GO" id="GO:0005737">
    <property type="term" value="C:cytoplasm"/>
    <property type="evidence" value="ECO:0007005"/>
    <property type="project" value="SGD"/>
</dbReference>
<dbReference type="GO" id="GO:0005829">
    <property type="term" value="C:cytosol"/>
    <property type="evidence" value="ECO:0000318"/>
    <property type="project" value="GO_Central"/>
</dbReference>
<dbReference type="GO" id="GO:0005739">
    <property type="term" value="C:mitochondrion"/>
    <property type="evidence" value="ECO:0000314"/>
    <property type="project" value="SGD"/>
</dbReference>
<dbReference type="GO" id="GO:0005634">
    <property type="term" value="C:nucleus"/>
    <property type="evidence" value="ECO:0007005"/>
    <property type="project" value="SGD"/>
</dbReference>
<dbReference type="GO" id="GO:0047631">
    <property type="term" value="F:ADP-ribose diphosphatase activity"/>
    <property type="evidence" value="ECO:0000314"/>
    <property type="project" value="SGD"/>
</dbReference>
<dbReference type="GO" id="GO:0046872">
    <property type="term" value="F:metal ion binding"/>
    <property type="evidence" value="ECO:0007669"/>
    <property type="project" value="UniProtKB-KW"/>
</dbReference>
<dbReference type="GO" id="GO:0006753">
    <property type="term" value="P:nucleoside phosphate metabolic process"/>
    <property type="evidence" value="ECO:0000318"/>
    <property type="project" value="GO_Central"/>
</dbReference>
<dbReference type="GO" id="GO:0019693">
    <property type="term" value="P:ribose phosphate metabolic process"/>
    <property type="evidence" value="ECO:0000314"/>
    <property type="project" value="SGD"/>
</dbReference>
<dbReference type="CDD" id="cd18888">
    <property type="entry name" value="NUDIX_ADPRase_Nudt5"/>
    <property type="match status" value="1"/>
</dbReference>
<dbReference type="FunFam" id="3.90.79.10:FF:000016">
    <property type="entry name" value="ADP-sugar pyrophosphatase isoform X1"/>
    <property type="match status" value="1"/>
</dbReference>
<dbReference type="Gene3D" id="3.90.79.10">
    <property type="entry name" value="Nucleoside Triphosphate Pyrophosphohydrolase"/>
    <property type="match status" value="1"/>
</dbReference>
<dbReference type="InterPro" id="IPR015797">
    <property type="entry name" value="NUDIX_hydrolase-like_dom_sf"/>
</dbReference>
<dbReference type="InterPro" id="IPR020084">
    <property type="entry name" value="NUDIX_hydrolase_CS"/>
</dbReference>
<dbReference type="InterPro" id="IPR000086">
    <property type="entry name" value="NUDIX_hydrolase_dom"/>
</dbReference>
<dbReference type="PANTHER" id="PTHR11839:SF1">
    <property type="entry name" value="ADP-SUGAR PYROPHOSPHATASE"/>
    <property type="match status" value="1"/>
</dbReference>
<dbReference type="PANTHER" id="PTHR11839">
    <property type="entry name" value="UDP/ADP-SUGAR PYROPHOSPHATASE"/>
    <property type="match status" value="1"/>
</dbReference>
<dbReference type="Pfam" id="PF00293">
    <property type="entry name" value="NUDIX"/>
    <property type="match status" value="1"/>
</dbReference>
<dbReference type="SUPFAM" id="SSF55811">
    <property type="entry name" value="Nudix"/>
    <property type="match status" value="1"/>
</dbReference>
<dbReference type="PROSITE" id="PS51462">
    <property type="entry name" value="NUDIX"/>
    <property type="match status" value="1"/>
</dbReference>
<dbReference type="PROSITE" id="PS00893">
    <property type="entry name" value="NUDIX_BOX"/>
    <property type="match status" value="1"/>
</dbReference>
<evidence type="ECO:0000250" key="1"/>
<evidence type="ECO:0000255" key="2">
    <source>
        <dbReference type="PROSITE-ProRule" id="PRU00794"/>
    </source>
</evidence>
<evidence type="ECO:0000269" key="3">
    <source>
    </source>
</evidence>
<evidence type="ECO:0000269" key="4">
    <source>
    </source>
</evidence>
<evidence type="ECO:0000305" key="5"/>
<evidence type="ECO:0000305" key="6">
    <source>
    </source>
</evidence>
<evidence type="ECO:0007744" key="7">
    <source>
    </source>
</evidence>
<accession>Q01976</accession>
<accession>D6VQB0</accession>